<gene>
    <name type="primary">pptA</name>
</gene>
<keyword id="KW-0808">Transferase</keyword>
<reference key="1">
    <citation type="journal article" date="2015" name="Chem. Biol.">
        <title>Three redundant synthetases secure redox-active pigment production in the basidiomycete Paxillus involutus.</title>
        <authorList>
            <person name="Braesel J."/>
            <person name="Gotze S."/>
            <person name="Shah F."/>
            <person name="Heine D."/>
            <person name="Tauber J."/>
            <person name="Hertweck C."/>
            <person name="Tunlid A."/>
            <person name="Stallforth P."/>
            <person name="Hoffmeister D."/>
        </authorList>
    </citation>
    <scope>NUCLEOTIDE SEQUENCE [GENOMIC DNA]</scope>
    <scope>FUNCTION</scope>
    <scope>CATALYTIC ACTIVITY</scope>
    <source>
        <strain>ATCC MYA-4647</strain>
    </source>
</reference>
<protein>
    <recommendedName>
        <fullName>4'-phosphopantetheinyl transferase pptA</fullName>
        <shortName>PPTase</shortName>
        <ecNumber evidence="1">2.7.8.7</ecNumber>
    </recommendedName>
    <alternativeName>
        <fullName>Phosphopantetheinyl transferase</fullName>
    </alternativeName>
</protein>
<feature type="chain" id="PRO_0000442636" description="4'-phosphopantetheinyl transferase pptA">
    <location>
        <begin position="1"/>
        <end position="263"/>
    </location>
</feature>
<name>PPTA_PAXIN</name>
<accession>A0A0S1RVB0</accession>
<evidence type="ECO:0000269" key="1">
    <source>
    </source>
</evidence>
<evidence type="ECO:0000305" key="2"/>
<dbReference type="EC" id="2.7.8.7" evidence="1"/>
<dbReference type="EMBL" id="KT935507">
    <property type="protein sequence ID" value="ALL98444.1"/>
    <property type="molecule type" value="Genomic_DNA"/>
</dbReference>
<dbReference type="SMR" id="A0A0S1RVB0"/>
<dbReference type="GO" id="GO:0005829">
    <property type="term" value="C:cytosol"/>
    <property type="evidence" value="ECO:0007669"/>
    <property type="project" value="TreeGrafter"/>
</dbReference>
<dbReference type="GO" id="GO:0008897">
    <property type="term" value="F:holo-[acyl-carrier-protein] synthase activity"/>
    <property type="evidence" value="ECO:0007669"/>
    <property type="project" value="UniProtKB-EC"/>
</dbReference>
<dbReference type="GO" id="GO:0000287">
    <property type="term" value="F:magnesium ion binding"/>
    <property type="evidence" value="ECO:0007669"/>
    <property type="project" value="InterPro"/>
</dbReference>
<dbReference type="GO" id="GO:0019878">
    <property type="term" value="P:lysine biosynthetic process via aminoadipic acid"/>
    <property type="evidence" value="ECO:0007669"/>
    <property type="project" value="TreeGrafter"/>
</dbReference>
<dbReference type="Gene3D" id="3.90.470.20">
    <property type="entry name" value="4'-phosphopantetheinyl transferase domain"/>
    <property type="match status" value="2"/>
</dbReference>
<dbReference type="InterPro" id="IPR008278">
    <property type="entry name" value="4-PPantetheinyl_Trfase_dom"/>
</dbReference>
<dbReference type="InterPro" id="IPR037143">
    <property type="entry name" value="4-PPantetheinyl_Trfase_dom_sf"/>
</dbReference>
<dbReference type="InterPro" id="IPR055066">
    <property type="entry name" value="AASDHPPT_N"/>
</dbReference>
<dbReference type="InterPro" id="IPR050559">
    <property type="entry name" value="P-Pant_transferase_sf"/>
</dbReference>
<dbReference type="PANTHER" id="PTHR12215:SF10">
    <property type="entry name" value="L-AMINOADIPATE-SEMIALDEHYDE DEHYDROGENASE-PHOSPHOPANTETHEINYL TRANSFERASE"/>
    <property type="match status" value="1"/>
</dbReference>
<dbReference type="PANTHER" id="PTHR12215">
    <property type="entry name" value="PHOSPHOPANTETHEINE TRANSFERASE"/>
    <property type="match status" value="1"/>
</dbReference>
<dbReference type="Pfam" id="PF22624">
    <property type="entry name" value="AASDHPPT_N"/>
    <property type="match status" value="1"/>
</dbReference>
<dbReference type="Pfam" id="PF01648">
    <property type="entry name" value="ACPS"/>
    <property type="match status" value="1"/>
</dbReference>
<dbReference type="SUPFAM" id="SSF56214">
    <property type="entry name" value="4'-phosphopantetheinyl transferase"/>
    <property type="match status" value="2"/>
</dbReference>
<organism>
    <name type="scientific">Paxillus involutus</name>
    <name type="common">Naked brimcap</name>
    <dbReference type="NCBI Taxonomy" id="71150"/>
    <lineage>
        <taxon>Eukaryota</taxon>
        <taxon>Fungi</taxon>
        <taxon>Dikarya</taxon>
        <taxon>Basidiomycota</taxon>
        <taxon>Agaricomycotina</taxon>
        <taxon>Agaricomycetes</taxon>
        <taxon>Agaricomycetidae</taxon>
        <taxon>Boletales</taxon>
        <taxon>Paxilineae</taxon>
        <taxon>Paxillaceae</taxon>
        <taxon>Paxillus</taxon>
    </lineage>
</organism>
<sequence>MQVWAIIYDKADFPDTLYQNALPFVDQAVQSKIKRFHRREDACRSLIGSLLPRVLLRKRGVSRDEMTFATTENGKPYCTTPDIDPPLGFNVTHDESVIAMAFGSGDLGPPAYNLGVDVMQLKVPPRITFSEFVDSVSSQESDQLTARERNIVLADIPEGEALRRFYWVWTLKEAYTKALGIGLGFDFRRIQYDVLEEKVTIDGELARGWQFRKFEVAHSGNKYVGVAARFVGGRNPSITDLDEGSLVCYDAASFVNRAIEELV</sequence>
<comment type="function">
    <text evidence="1">Transfers the 4'-phosphopantetheine moiety from coenzyme A to a Ser of an acyl-carrier-protein. Activates the peptidyl carrier protein (PCP) domains of surfactin synthas.</text>
</comment>
<comment type="catalytic activity">
    <reaction evidence="1">
        <text>apo-[ACP] + CoA = holo-[ACP] + adenosine 3',5'-bisphosphate + H(+)</text>
        <dbReference type="Rhea" id="RHEA:12068"/>
        <dbReference type="Rhea" id="RHEA-COMP:9685"/>
        <dbReference type="Rhea" id="RHEA-COMP:9690"/>
        <dbReference type="ChEBI" id="CHEBI:15378"/>
        <dbReference type="ChEBI" id="CHEBI:29999"/>
        <dbReference type="ChEBI" id="CHEBI:57287"/>
        <dbReference type="ChEBI" id="CHEBI:58343"/>
        <dbReference type="ChEBI" id="CHEBI:64479"/>
        <dbReference type="EC" id="2.7.8.7"/>
    </reaction>
</comment>
<comment type="similarity">
    <text evidence="2">Belongs to the P-Pant transferase superfamily.</text>
</comment>
<proteinExistence type="evidence at protein level"/>